<comment type="function">
    <text evidence="1">Catalyzes the NAD(+)-dependent oxidation of L-threonine to 2-amino-3-ketobutyrate.</text>
</comment>
<comment type="catalytic activity">
    <reaction evidence="1">
        <text>L-threonine + NAD(+) = (2S)-2-amino-3-oxobutanoate + NADH + H(+)</text>
        <dbReference type="Rhea" id="RHEA:13161"/>
        <dbReference type="ChEBI" id="CHEBI:15378"/>
        <dbReference type="ChEBI" id="CHEBI:57540"/>
        <dbReference type="ChEBI" id="CHEBI:57926"/>
        <dbReference type="ChEBI" id="CHEBI:57945"/>
        <dbReference type="ChEBI" id="CHEBI:78948"/>
        <dbReference type="EC" id="1.1.1.103"/>
    </reaction>
</comment>
<comment type="cofactor">
    <cofactor evidence="1">
        <name>Zn(2+)</name>
        <dbReference type="ChEBI" id="CHEBI:29105"/>
    </cofactor>
    <text evidence="1">Binds 2 Zn(2+) ions per subunit.</text>
</comment>
<comment type="pathway">
    <text evidence="1">Amino-acid degradation; L-threonine degradation via oxydo-reductase pathway; glycine from L-threonine: step 1/2.</text>
</comment>
<comment type="subunit">
    <text evidence="1">Homotetramer.</text>
</comment>
<comment type="subcellular location">
    <subcellularLocation>
        <location evidence="1">Cytoplasm</location>
    </subcellularLocation>
</comment>
<comment type="similarity">
    <text evidence="1">Belongs to the zinc-containing alcohol dehydrogenase family.</text>
</comment>
<comment type="sequence caution" evidence="2">
    <conflict type="erroneous initiation">
        <sequence resource="EMBL-CDS" id="AAM25543"/>
    </conflict>
</comment>
<proteinExistence type="inferred from homology"/>
<feature type="chain" id="PRO_0000160864" description="L-threonine 3-dehydrogenase">
    <location>
        <begin position="1"/>
        <end position="347"/>
    </location>
</feature>
<feature type="active site" description="Charge relay system" evidence="1">
    <location>
        <position position="44"/>
    </location>
</feature>
<feature type="active site" description="Charge relay system" evidence="1">
    <location>
        <position position="47"/>
    </location>
</feature>
<feature type="binding site" evidence="1">
    <location>
        <position position="42"/>
    </location>
    <ligand>
        <name>Zn(2+)</name>
        <dbReference type="ChEBI" id="CHEBI:29105"/>
        <label>1</label>
        <note>catalytic</note>
    </ligand>
</feature>
<feature type="binding site" evidence="1">
    <location>
        <position position="67"/>
    </location>
    <ligand>
        <name>Zn(2+)</name>
        <dbReference type="ChEBI" id="CHEBI:29105"/>
        <label>1</label>
        <note>catalytic</note>
    </ligand>
</feature>
<feature type="binding site" evidence="1">
    <location>
        <position position="68"/>
    </location>
    <ligand>
        <name>Zn(2+)</name>
        <dbReference type="ChEBI" id="CHEBI:29105"/>
        <label>1</label>
        <note>catalytic</note>
    </ligand>
</feature>
<feature type="binding site" evidence="1">
    <location>
        <position position="97"/>
    </location>
    <ligand>
        <name>Zn(2+)</name>
        <dbReference type="ChEBI" id="CHEBI:29105"/>
        <label>2</label>
    </ligand>
</feature>
<feature type="binding site" evidence="1">
    <location>
        <position position="100"/>
    </location>
    <ligand>
        <name>Zn(2+)</name>
        <dbReference type="ChEBI" id="CHEBI:29105"/>
        <label>2</label>
    </ligand>
</feature>
<feature type="binding site" evidence="1">
    <location>
        <position position="103"/>
    </location>
    <ligand>
        <name>Zn(2+)</name>
        <dbReference type="ChEBI" id="CHEBI:29105"/>
        <label>2</label>
    </ligand>
</feature>
<feature type="binding site" evidence="1">
    <location>
        <position position="111"/>
    </location>
    <ligand>
        <name>Zn(2+)</name>
        <dbReference type="ChEBI" id="CHEBI:29105"/>
        <label>2</label>
    </ligand>
</feature>
<feature type="binding site" evidence="1">
    <location>
        <position position="179"/>
    </location>
    <ligand>
        <name>NAD(+)</name>
        <dbReference type="ChEBI" id="CHEBI:57540"/>
    </ligand>
</feature>
<feature type="binding site" evidence="1">
    <location>
        <position position="199"/>
    </location>
    <ligand>
        <name>NAD(+)</name>
        <dbReference type="ChEBI" id="CHEBI:57540"/>
    </ligand>
</feature>
<feature type="binding site" evidence="1">
    <location>
        <position position="204"/>
    </location>
    <ligand>
        <name>NAD(+)</name>
        <dbReference type="ChEBI" id="CHEBI:57540"/>
    </ligand>
</feature>
<feature type="binding site" evidence="1">
    <location>
        <begin position="266"/>
        <end position="268"/>
    </location>
    <ligand>
        <name>NAD(+)</name>
        <dbReference type="ChEBI" id="CHEBI:57540"/>
    </ligand>
</feature>
<feature type="binding site" evidence="1">
    <location>
        <begin position="291"/>
        <end position="292"/>
    </location>
    <ligand>
        <name>NAD(+)</name>
        <dbReference type="ChEBI" id="CHEBI:57540"/>
    </ligand>
</feature>
<feature type="site" description="Important for catalytic activity for the proton relay mechanism but does not participate directly in the coordination of zinc atom" evidence="1">
    <location>
        <position position="152"/>
    </location>
</feature>
<keyword id="KW-0963">Cytoplasm</keyword>
<keyword id="KW-0479">Metal-binding</keyword>
<keyword id="KW-0520">NAD</keyword>
<keyword id="KW-0560">Oxidoreductase</keyword>
<keyword id="KW-1185">Reference proteome</keyword>
<keyword id="KW-0862">Zinc</keyword>
<name>TDH_CALS4</name>
<dbReference type="EC" id="1.1.1.103" evidence="1"/>
<dbReference type="EMBL" id="AE008691">
    <property type="protein sequence ID" value="AAM25543.1"/>
    <property type="status" value="ALT_INIT"/>
    <property type="molecule type" value="Genomic_DNA"/>
</dbReference>
<dbReference type="RefSeq" id="WP_041587222.1">
    <property type="nucleotide sequence ID" value="NC_003869.1"/>
</dbReference>
<dbReference type="SMR" id="Q8R7K0"/>
<dbReference type="STRING" id="273068.TTE2405"/>
<dbReference type="KEGG" id="tte:TTE2405"/>
<dbReference type="eggNOG" id="COG1063">
    <property type="taxonomic scope" value="Bacteria"/>
</dbReference>
<dbReference type="HOGENOM" id="CLU_026673_11_0_9"/>
<dbReference type="UniPathway" id="UPA00046">
    <property type="reaction ID" value="UER00505"/>
</dbReference>
<dbReference type="Proteomes" id="UP000000555">
    <property type="component" value="Chromosome"/>
</dbReference>
<dbReference type="GO" id="GO:0005737">
    <property type="term" value="C:cytoplasm"/>
    <property type="evidence" value="ECO:0007669"/>
    <property type="project" value="UniProtKB-SubCell"/>
</dbReference>
<dbReference type="GO" id="GO:0008743">
    <property type="term" value="F:L-threonine 3-dehydrogenase activity"/>
    <property type="evidence" value="ECO:0007669"/>
    <property type="project" value="UniProtKB-UniRule"/>
</dbReference>
<dbReference type="GO" id="GO:0008270">
    <property type="term" value="F:zinc ion binding"/>
    <property type="evidence" value="ECO:0007669"/>
    <property type="project" value="UniProtKB-UniRule"/>
</dbReference>
<dbReference type="GO" id="GO:0019518">
    <property type="term" value="P:L-threonine catabolic process to glycine"/>
    <property type="evidence" value="ECO:0007669"/>
    <property type="project" value="UniProtKB-UniPathway"/>
</dbReference>
<dbReference type="CDD" id="cd05281">
    <property type="entry name" value="TDH"/>
    <property type="match status" value="1"/>
</dbReference>
<dbReference type="Gene3D" id="3.90.180.10">
    <property type="entry name" value="Medium-chain alcohol dehydrogenases, catalytic domain"/>
    <property type="match status" value="1"/>
</dbReference>
<dbReference type="Gene3D" id="3.40.50.720">
    <property type="entry name" value="NAD(P)-binding Rossmann-like Domain"/>
    <property type="match status" value="1"/>
</dbReference>
<dbReference type="HAMAP" id="MF_00627">
    <property type="entry name" value="Thr_dehydrog"/>
    <property type="match status" value="1"/>
</dbReference>
<dbReference type="InterPro" id="IPR013149">
    <property type="entry name" value="ADH-like_C"/>
</dbReference>
<dbReference type="InterPro" id="IPR013154">
    <property type="entry name" value="ADH-like_N"/>
</dbReference>
<dbReference type="InterPro" id="IPR002328">
    <property type="entry name" value="ADH_Zn_CS"/>
</dbReference>
<dbReference type="InterPro" id="IPR011032">
    <property type="entry name" value="GroES-like_sf"/>
</dbReference>
<dbReference type="InterPro" id="IPR004627">
    <property type="entry name" value="L-Threonine_3-DHase"/>
</dbReference>
<dbReference type="InterPro" id="IPR036291">
    <property type="entry name" value="NAD(P)-bd_dom_sf"/>
</dbReference>
<dbReference type="InterPro" id="IPR020843">
    <property type="entry name" value="PKS_ER"/>
</dbReference>
<dbReference type="InterPro" id="IPR050129">
    <property type="entry name" value="Zn_alcohol_dh"/>
</dbReference>
<dbReference type="NCBIfam" id="NF003808">
    <property type="entry name" value="PRK05396.1"/>
    <property type="match status" value="1"/>
</dbReference>
<dbReference type="NCBIfam" id="TIGR00692">
    <property type="entry name" value="tdh"/>
    <property type="match status" value="1"/>
</dbReference>
<dbReference type="PANTHER" id="PTHR43401">
    <property type="entry name" value="L-THREONINE 3-DEHYDROGENASE"/>
    <property type="match status" value="1"/>
</dbReference>
<dbReference type="PANTHER" id="PTHR43401:SF2">
    <property type="entry name" value="L-THREONINE 3-DEHYDROGENASE"/>
    <property type="match status" value="1"/>
</dbReference>
<dbReference type="Pfam" id="PF08240">
    <property type="entry name" value="ADH_N"/>
    <property type="match status" value="1"/>
</dbReference>
<dbReference type="Pfam" id="PF00107">
    <property type="entry name" value="ADH_zinc_N"/>
    <property type="match status" value="1"/>
</dbReference>
<dbReference type="SMART" id="SM00829">
    <property type="entry name" value="PKS_ER"/>
    <property type="match status" value="1"/>
</dbReference>
<dbReference type="SUPFAM" id="SSF50129">
    <property type="entry name" value="GroES-like"/>
    <property type="match status" value="1"/>
</dbReference>
<dbReference type="SUPFAM" id="SSF51735">
    <property type="entry name" value="NAD(P)-binding Rossmann-fold domains"/>
    <property type="match status" value="1"/>
</dbReference>
<dbReference type="PROSITE" id="PS00059">
    <property type="entry name" value="ADH_ZINC"/>
    <property type="match status" value="1"/>
</dbReference>
<evidence type="ECO:0000255" key="1">
    <source>
        <dbReference type="HAMAP-Rule" id="MF_00627"/>
    </source>
</evidence>
<evidence type="ECO:0000305" key="2"/>
<gene>
    <name evidence="1" type="primary">tdh</name>
    <name type="synonym">tdh3</name>
    <name type="ordered locus">TTE2405</name>
</gene>
<organism>
    <name type="scientific">Caldanaerobacter subterraneus subsp. tengcongensis (strain DSM 15242 / JCM 11007 / NBRC 100824 / MB4)</name>
    <name type="common">Thermoanaerobacter tengcongensis</name>
    <dbReference type="NCBI Taxonomy" id="273068"/>
    <lineage>
        <taxon>Bacteria</taxon>
        <taxon>Bacillati</taxon>
        <taxon>Bacillota</taxon>
        <taxon>Clostridia</taxon>
        <taxon>Thermoanaerobacterales</taxon>
        <taxon>Thermoanaerobacteraceae</taxon>
        <taxon>Caldanaerobacter</taxon>
    </lineage>
</organism>
<sequence>MDGLMTAVVKQYHKEGADIVKKEIPKIGPDEVLIKVKATSICGTDVHIYVWNEWAKSRIKPPKTMGHEFVGEVVEIGENVTSVKVGDLVSAETHIVCGKCRACRTGNAHICENTLILGVDTDGAFAEYIKVPESNVWINDKNIPLEILSIQEPLGNAVHTVFSGDVVGKSVAVIGCGPIGMMAIPLLKRTGAAAIFAIEPADYRRELAHKLGATRVINPLREDVVSIIKSETEGYGADVVLDFSGNPTAIRQGLEYIAKGGRMSILGLPDNEVPIDITNNVVFKGITIQGITGRRMYDTWYTVKGLLKSGLAEDLKPIITHTFPLTEYQKGMELMIKGQCGKVVLYP</sequence>
<accession>Q8R7K0</accession>
<reference key="1">
    <citation type="journal article" date="2002" name="Genome Res.">
        <title>A complete sequence of the T. tengcongensis genome.</title>
        <authorList>
            <person name="Bao Q."/>
            <person name="Tian Y."/>
            <person name="Li W."/>
            <person name="Xu Z."/>
            <person name="Xuan Z."/>
            <person name="Hu S."/>
            <person name="Dong W."/>
            <person name="Yang J."/>
            <person name="Chen Y."/>
            <person name="Xue Y."/>
            <person name="Xu Y."/>
            <person name="Lai X."/>
            <person name="Huang L."/>
            <person name="Dong X."/>
            <person name="Ma Y."/>
            <person name="Ling L."/>
            <person name="Tan H."/>
            <person name="Chen R."/>
            <person name="Wang J."/>
            <person name="Yu J."/>
            <person name="Yang H."/>
        </authorList>
    </citation>
    <scope>NUCLEOTIDE SEQUENCE [LARGE SCALE GENOMIC DNA]</scope>
    <source>
        <strain>DSM 15242 / JCM 11007 / NBRC 100824 / MB4</strain>
    </source>
</reference>
<protein>
    <recommendedName>
        <fullName evidence="1">L-threonine 3-dehydrogenase</fullName>
        <shortName evidence="1">TDH</shortName>
        <ecNumber evidence="1">1.1.1.103</ecNumber>
    </recommendedName>
</protein>